<keyword id="KW-0233">DNA recombination</keyword>
<keyword id="KW-0238">DNA-binding</keyword>
<keyword id="KW-1185">Reference proteome</keyword>
<keyword id="KW-0804">Transcription</keyword>
<keyword id="KW-0805">Transcription regulation</keyword>
<keyword id="KW-0810">Translation regulation</keyword>
<evidence type="ECO:0000255" key="1">
    <source>
        <dbReference type="HAMAP-Rule" id="MF_00380"/>
    </source>
</evidence>
<protein>
    <recommendedName>
        <fullName evidence="1">Integration host factor subunit alpha</fullName>
        <shortName evidence="1">IHF-alpha</shortName>
    </recommendedName>
</protein>
<comment type="function">
    <text evidence="1">This protein is one of the two subunits of integration host factor, a specific DNA-binding protein that functions in genetic recombination as well as in transcriptional and translational control.</text>
</comment>
<comment type="subunit">
    <text evidence="1">Heterodimer of an alpha and a beta chain.</text>
</comment>
<comment type="similarity">
    <text evidence="1">Belongs to the bacterial histone-like protein family.</text>
</comment>
<gene>
    <name evidence="1" type="primary">ihfA</name>
    <name evidence="1" type="synonym">himA</name>
    <name type="ordered locus">AZC_2293</name>
</gene>
<accession>A8I5K8</accession>
<reference key="1">
    <citation type="submission" date="2007-04" db="EMBL/GenBank/DDBJ databases">
        <title>Complete genome sequence of the nitrogen-fixing bacterium Azorhizobium caulinodans ORS571.</title>
        <authorList>
            <person name="Lee K.B."/>
            <person name="Backer P.D."/>
            <person name="Aono T."/>
            <person name="Liu C.T."/>
            <person name="Suzuki S."/>
            <person name="Suzuki T."/>
            <person name="Kaneko T."/>
            <person name="Yamada M."/>
            <person name="Tabata S."/>
            <person name="Kupfer D.M."/>
            <person name="Najar F.Z."/>
            <person name="Wiley G.B."/>
            <person name="Roe B."/>
            <person name="Binnewies T."/>
            <person name="Ussery D."/>
            <person name="Vereecke D."/>
            <person name="Gevers D."/>
            <person name="Holsters M."/>
            <person name="Oyaizu H."/>
        </authorList>
    </citation>
    <scope>NUCLEOTIDE SEQUENCE [LARGE SCALE GENOMIC DNA]</scope>
    <source>
        <strain>ATCC 43989 / DSM 5975 / JCM 20966 / LMG 6465 / NBRC 14845 / NCIMB 13405 / ORS 571</strain>
    </source>
</reference>
<sequence length="105" mass="11491">MAGRTITRADLCEAVYQQVGLSRTESAALVEMVLREIADCLAKGETVKLSSFGSFVVRDKGQRVGRNPKTGEEVPIEPRRVMVFKPSSILKNRINGRTGKAAGRE</sequence>
<feature type="chain" id="PRO_1000072172" description="Integration host factor subunit alpha">
    <location>
        <begin position="1"/>
        <end position="105"/>
    </location>
</feature>
<proteinExistence type="inferred from homology"/>
<organism>
    <name type="scientific">Azorhizobium caulinodans (strain ATCC 43989 / DSM 5975 / JCM 20966 / LMG 6465 / NBRC 14845 / NCIMB 13405 / ORS 571)</name>
    <dbReference type="NCBI Taxonomy" id="438753"/>
    <lineage>
        <taxon>Bacteria</taxon>
        <taxon>Pseudomonadati</taxon>
        <taxon>Pseudomonadota</taxon>
        <taxon>Alphaproteobacteria</taxon>
        <taxon>Hyphomicrobiales</taxon>
        <taxon>Xanthobacteraceae</taxon>
        <taxon>Azorhizobium</taxon>
    </lineage>
</organism>
<name>IHFA_AZOC5</name>
<dbReference type="EMBL" id="AP009384">
    <property type="protein sequence ID" value="BAF88291.1"/>
    <property type="molecule type" value="Genomic_DNA"/>
</dbReference>
<dbReference type="RefSeq" id="WP_012170820.1">
    <property type="nucleotide sequence ID" value="NC_009937.1"/>
</dbReference>
<dbReference type="SMR" id="A8I5K8"/>
<dbReference type="STRING" id="438753.AZC_2293"/>
<dbReference type="KEGG" id="azc:AZC_2293"/>
<dbReference type="eggNOG" id="COG0776">
    <property type="taxonomic scope" value="Bacteria"/>
</dbReference>
<dbReference type="HOGENOM" id="CLU_105066_1_1_5"/>
<dbReference type="Proteomes" id="UP000000270">
    <property type="component" value="Chromosome"/>
</dbReference>
<dbReference type="GO" id="GO:0005829">
    <property type="term" value="C:cytosol"/>
    <property type="evidence" value="ECO:0007669"/>
    <property type="project" value="TreeGrafter"/>
</dbReference>
<dbReference type="GO" id="GO:0003677">
    <property type="term" value="F:DNA binding"/>
    <property type="evidence" value="ECO:0007669"/>
    <property type="project" value="UniProtKB-UniRule"/>
</dbReference>
<dbReference type="GO" id="GO:0030527">
    <property type="term" value="F:structural constituent of chromatin"/>
    <property type="evidence" value="ECO:0007669"/>
    <property type="project" value="InterPro"/>
</dbReference>
<dbReference type="GO" id="GO:0006310">
    <property type="term" value="P:DNA recombination"/>
    <property type="evidence" value="ECO:0007669"/>
    <property type="project" value="UniProtKB-UniRule"/>
</dbReference>
<dbReference type="GO" id="GO:0009893">
    <property type="term" value="P:positive regulation of metabolic process"/>
    <property type="evidence" value="ECO:0007669"/>
    <property type="project" value="UniProtKB-ARBA"/>
</dbReference>
<dbReference type="GO" id="GO:0006355">
    <property type="term" value="P:regulation of DNA-templated transcription"/>
    <property type="evidence" value="ECO:0007669"/>
    <property type="project" value="UniProtKB-UniRule"/>
</dbReference>
<dbReference type="GO" id="GO:0006417">
    <property type="term" value="P:regulation of translation"/>
    <property type="evidence" value="ECO:0007669"/>
    <property type="project" value="UniProtKB-UniRule"/>
</dbReference>
<dbReference type="CDD" id="cd13835">
    <property type="entry name" value="IHF_A"/>
    <property type="match status" value="1"/>
</dbReference>
<dbReference type="FunFam" id="4.10.520.10:FF:000010">
    <property type="entry name" value="Integration host factor subunit alpha"/>
    <property type="match status" value="1"/>
</dbReference>
<dbReference type="Gene3D" id="4.10.520.10">
    <property type="entry name" value="IHF-like DNA-binding proteins"/>
    <property type="match status" value="1"/>
</dbReference>
<dbReference type="HAMAP" id="MF_00380">
    <property type="entry name" value="IHF_alpha"/>
    <property type="match status" value="1"/>
</dbReference>
<dbReference type="InterPro" id="IPR000119">
    <property type="entry name" value="Hist_DNA-bd"/>
</dbReference>
<dbReference type="InterPro" id="IPR020816">
    <property type="entry name" value="Histone-like_DNA-bd_CS"/>
</dbReference>
<dbReference type="InterPro" id="IPR010992">
    <property type="entry name" value="IHF-like_DNA-bd_dom_sf"/>
</dbReference>
<dbReference type="InterPro" id="IPR005684">
    <property type="entry name" value="IHF_alpha"/>
</dbReference>
<dbReference type="NCBIfam" id="TIGR00987">
    <property type="entry name" value="himA"/>
    <property type="match status" value="1"/>
</dbReference>
<dbReference type="NCBIfam" id="NF001401">
    <property type="entry name" value="PRK00285.1"/>
    <property type="match status" value="1"/>
</dbReference>
<dbReference type="PANTHER" id="PTHR33175">
    <property type="entry name" value="DNA-BINDING PROTEIN HU"/>
    <property type="match status" value="1"/>
</dbReference>
<dbReference type="PANTHER" id="PTHR33175:SF2">
    <property type="entry name" value="INTEGRATION HOST FACTOR SUBUNIT ALPHA"/>
    <property type="match status" value="1"/>
</dbReference>
<dbReference type="Pfam" id="PF00216">
    <property type="entry name" value="Bac_DNA_binding"/>
    <property type="match status" value="1"/>
</dbReference>
<dbReference type="PRINTS" id="PR01727">
    <property type="entry name" value="DNABINDINGHU"/>
</dbReference>
<dbReference type="SMART" id="SM00411">
    <property type="entry name" value="BHL"/>
    <property type="match status" value="1"/>
</dbReference>
<dbReference type="SUPFAM" id="SSF47729">
    <property type="entry name" value="IHF-like DNA-binding proteins"/>
    <property type="match status" value="1"/>
</dbReference>
<dbReference type="PROSITE" id="PS00045">
    <property type="entry name" value="HISTONE_LIKE"/>
    <property type="match status" value="1"/>
</dbReference>